<protein>
    <recommendedName>
        <fullName>Extracellular metalloprotease VDBG_01143</fullName>
        <ecNumber>3.4.24.-</ecNumber>
    </recommendedName>
</protein>
<evidence type="ECO:0000250" key="1"/>
<evidence type="ECO:0000255" key="2"/>
<evidence type="ECO:0000255" key="3">
    <source>
        <dbReference type="PROSITE-ProRule" id="PRU10095"/>
    </source>
</evidence>
<evidence type="ECO:0000305" key="4"/>
<comment type="function">
    <text evidence="1">Secreted metalloproteinase that allows assimilation of proteinaceous substrates.</text>
</comment>
<comment type="subcellular location">
    <subcellularLocation>
        <location evidence="1">Secreted</location>
    </subcellularLocation>
</comment>
<comment type="similarity">
    <text evidence="4">Belongs to the peptidase M43B family.</text>
</comment>
<name>MEP1_VERA1</name>
<keyword id="KW-1015">Disulfide bond</keyword>
<keyword id="KW-0325">Glycoprotein</keyword>
<keyword id="KW-0378">Hydrolase</keyword>
<keyword id="KW-0479">Metal-binding</keyword>
<keyword id="KW-0482">Metalloprotease</keyword>
<keyword id="KW-0645">Protease</keyword>
<keyword id="KW-1185">Reference proteome</keyword>
<keyword id="KW-0964">Secreted</keyword>
<keyword id="KW-0732">Signal</keyword>
<keyword id="KW-0862">Zinc</keyword>
<organism>
    <name type="scientific">Verticillium alfalfae (strain VaMs.102 / ATCC MYA-4576 / FGSC 10136)</name>
    <name type="common">Verticillium wilt of alfalfa</name>
    <name type="synonym">Verticillium albo-atrum</name>
    <dbReference type="NCBI Taxonomy" id="526221"/>
    <lineage>
        <taxon>Eukaryota</taxon>
        <taxon>Fungi</taxon>
        <taxon>Dikarya</taxon>
        <taxon>Ascomycota</taxon>
        <taxon>Pezizomycotina</taxon>
        <taxon>Sordariomycetes</taxon>
        <taxon>Hypocreomycetidae</taxon>
        <taxon>Glomerellales</taxon>
        <taxon>Plectosphaerellaceae</taxon>
        <taxon>Verticillium</taxon>
    </lineage>
</organism>
<dbReference type="EC" id="3.4.24.-"/>
<dbReference type="EMBL" id="DS985214">
    <property type="protein sequence ID" value="EEY15034.1"/>
    <property type="molecule type" value="Genomic_DNA"/>
</dbReference>
<dbReference type="RefSeq" id="XP_003009460.1">
    <property type="nucleotide sequence ID" value="XM_003009414.1"/>
</dbReference>
<dbReference type="SMR" id="C9S5C6"/>
<dbReference type="MEROPS" id="M43.008"/>
<dbReference type="GeneID" id="9531043"/>
<dbReference type="KEGG" id="val:VDBG_01143"/>
<dbReference type="eggNOG" id="ENOG502RYKG">
    <property type="taxonomic scope" value="Eukaryota"/>
</dbReference>
<dbReference type="HOGENOM" id="CLU_048726_0_0_1"/>
<dbReference type="OMA" id="WGTNDAM"/>
<dbReference type="OrthoDB" id="536211at2759"/>
<dbReference type="Proteomes" id="UP000008698">
    <property type="component" value="Unassembled WGS sequence"/>
</dbReference>
<dbReference type="GO" id="GO:0005576">
    <property type="term" value="C:extracellular region"/>
    <property type="evidence" value="ECO:0007669"/>
    <property type="project" value="UniProtKB-SubCell"/>
</dbReference>
<dbReference type="GO" id="GO:0046872">
    <property type="term" value="F:metal ion binding"/>
    <property type="evidence" value="ECO:0007669"/>
    <property type="project" value="UniProtKB-KW"/>
</dbReference>
<dbReference type="GO" id="GO:0008237">
    <property type="term" value="F:metallopeptidase activity"/>
    <property type="evidence" value="ECO:0007669"/>
    <property type="project" value="UniProtKB-KW"/>
</dbReference>
<dbReference type="GO" id="GO:0006508">
    <property type="term" value="P:proteolysis"/>
    <property type="evidence" value="ECO:0007669"/>
    <property type="project" value="UniProtKB-KW"/>
</dbReference>
<dbReference type="CDD" id="cd04275">
    <property type="entry name" value="ZnMc_pappalysin_like"/>
    <property type="match status" value="1"/>
</dbReference>
<dbReference type="Gene3D" id="3.40.390.10">
    <property type="entry name" value="Collagenase (Catalytic Domain)"/>
    <property type="match status" value="1"/>
</dbReference>
<dbReference type="InterPro" id="IPR024079">
    <property type="entry name" value="MetalloPept_cat_dom_sf"/>
</dbReference>
<dbReference type="InterPro" id="IPR008754">
    <property type="entry name" value="Peptidase_M43"/>
</dbReference>
<dbReference type="PANTHER" id="PTHR47466">
    <property type="match status" value="1"/>
</dbReference>
<dbReference type="PANTHER" id="PTHR47466:SF1">
    <property type="entry name" value="METALLOPROTEASE MEP1 (AFU_ORTHOLOGUE AFUA_1G07730)-RELATED"/>
    <property type="match status" value="1"/>
</dbReference>
<dbReference type="Pfam" id="PF05572">
    <property type="entry name" value="Peptidase_M43"/>
    <property type="match status" value="1"/>
</dbReference>
<dbReference type="SUPFAM" id="SSF55486">
    <property type="entry name" value="Metalloproteases ('zincins'), catalytic domain"/>
    <property type="match status" value="1"/>
</dbReference>
<dbReference type="PROSITE" id="PS00142">
    <property type="entry name" value="ZINC_PROTEASE"/>
    <property type="match status" value="1"/>
</dbReference>
<proteinExistence type="inferred from homology"/>
<gene>
    <name type="ORF">VDBG_01143</name>
</gene>
<reference key="1">
    <citation type="journal article" date="2011" name="PLoS Pathog.">
        <title>Comparative genomics yields insights into niche adaptation of plant vascular wilt pathogens.</title>
        <authorList>
            <person name="Klosterman S.J."/>
            <person name="Subbarao K.V."/>
            <person name="Kang S."/>
            <person name="Veronese P."/>
            <person name="Gold S.E."/>
            <person name="Thomma B.P.H.J."/>
            <person name="Chen Z."/>
            <person name="Henrissat B."/>
            <person name="Lee Y.-H."/>
            <person name="Park J."/>
            <person name="Garcia-Pedrajas M.D."/>
            <person name="Barbara D.J."/>
            <person name="Anchieta A."/>
            <person name="de Jonge R."/>
            <person name="Santhanam P."/>
            <person name="Maruthachalam K."/>
            <person name="Atallah Z."/>
            <person name="Amyotte S.G."/>
            <person name="Paz Z."/>
            <person name="Inderbitzin P."/>
            <person name="Hayes R.J."/>
            <person name="Heiman D.I."/>
            <person name="Young S."/>
            <person name="Zeng Q."/>
            <person name="Engels R."/>
            <person name="Galagan J."/>
            <person name="Cuomo C.A."/>
            <person name="Dobinson K.F."/>
            <person name="Ma L.-J."/>
        </authorList>
    </citation>
    <scope>NUCLEOTIDE SEQUENCE [LARGE SCALE GENOMIC DNA]</scope>
    <source>
        <strain>VaMs.102 / ATCC MYA-4576 / FGSC 10136</strain>
    </source>
</reference>
<sequence length="284" mass="30337">MLFKSLFVAAATAVGVSGHVAREAPRTFGCGTHEPSAEHVGMSKVLAAQEARVLESGNLTARATINVNVYFHVVAASQTVANGYLTDKMVTDQIAVLNRDFAPHDVAFRLAGTDRTVNTGWARDSNEIAMKRALRKGTYKDLNLYTQVSLTDNALGYAYFPTSGATSGSTTFIRDGVSIKAQTVPGGSQAGFNLGKTGTHEVGHWLGLYHTFQGGCTGSGDQVSDTPAQASFSSGCPIGRDSCPGQAGLDPIHNYMDYSDDSCYEEFTPGQDARIHSFWTTYRA</sequence>
<accession>C9S5C6</accession>
<feature type="signal peptide" evidence="2">
    <location>
        <begin position="1"/>
        <end position="18"/>
    </location>
</feature>
<feature type="chain" id="PRO_0000407207" description="Extracellular metalloprotease VDBG_01143">
    <location>
        <begin position="19"/>
        <end position="284"/>
    </location>
</feature>
<feature type="active site" evidence="3">
    <location>
        <position position="201"/>
    </location>
</feature>
<feature type="binding site" evidence="3">
    <location>
        <position position="200"/>
    </location>
    <ligand>
        <name>Zn(2+)</name>
        <dbReference type="ChEBI" id="CHEBI:29105"/>
        <note>catalytic</note>
    </ligand>
</feature>
<feature type="binding site" evidence="3">
    <location>
        <position position="204"/>
    </location>
    <ligand>
        <name>Zn(2+)</name>
        <dbReference type="ChEBI" id="CHEBI:29105"/>
        <note>catalytic</note>
    </ligand>
</feature>
<feature type="glycosylation site" description="N-linked (GlcNAc...) asparagine" evidence="2">
    <location>
        <position position="58"/>
    </location>
</feature>
<feature type="disulfide bond" evidence="1">
    <location>
        <begin position="236"/>
        <end position="263"/>
    </location>
</feature>